<dbReference type="EMBL" id="BA000028">
    <property type="protein sequence ID" value="BAC12063.1"/>
    <property type="molecule type" value="Genomic_DNA"/>
</dbReference>
<dbReference type="RefSeq" id="WP_011064510.1">
    <property type="nucleotide sequence ID" value="NC_004193.1"/>
</dbReference>
<dbReference type="SMR" id="Q8ETZ3"/>
<dbReference type="STRING" id="221109.gene:10732297"/>
<dbReference type="KEGG" id="oih:OB0107"/>
<dbReference type="eggNOG" id="COG0080">
    <property type="taxonomic scope" value="Bacteria"/>
</dbReference>
<dbReference type="HOGENOM" id="CLU_074237_2_1_9"/>
<dbReference type="OrthoDB" id="9802408at2"/>
<dbReference type="PhylomeDB" id="Q8ETZ3"/>
<dbReference type="Proteomes" id="UP000000822">
    <property type="component" value="Chromosome"/>
</dbReference>
<dbReference type="GO" id="GO:0022625">
    <property type="term" value="C:cytosolic large ribosomal subunit"/>
    <property type="evidence" value="ECO:0007669"/>
    <property type="project" value="TreeGrafter"/>
</dbReference>
<dbReference type="GO" id="GO:0070180">
    <property type="term" value="F:large ribosomal subunit rRNA binding"/>
    <property type="evidence" value="ECO:0007669"/>
    <property type="project" value="UniProtKB-UniRule"/>
</dbReference>
<dbReference type="GO" id="GO:0003735">
    <property type="term" value="F:structural constituent of ribosome"/>
    <property type="evidence" value="ECO:0007669"/>
    <property type="project" value="InterPro"/>
</dbReference>
<dbReference type="GO" id="GO:0006412">
    <property type="term" value="P:translation"/>
    <property type="evidence" value="ECO:0007669"/>
    <property type="project" value="UniProtKB-UniRule"/>
</dbReference>
<dbReference type="CDD" id="cd00349">
    <property type="entry name" value="Ribosomal_L11"/>
    <property type="match status" value="1"/>
</dbReference>
<dbReference type="FunFam" id="1.10.10.250:FF:000001">
    <property type="entry name" value="50S ribosomal protein L11"/>
    <property type="match status" value="1"/>
</dbReference>
<dbReference type="FunFam" id="3.30.1550.10:FF:000001">
    <property type="entry name" value="50S ribosomal protein L11"/>
    <property type="match status" value="1"/>
</dbReference>
<dbReference type="Gene3D" id="1.10.10.250">
    <property type="entry name" value="Ribosomal protein L11, C-terminal domain"/>
    <property type="match status" value="1"/>
</dbReference>
<dbReference type="Gene3D" id="3.30.1550.10">
    <property type="entry name" value="Ribosomal protein L11/L12, N-terminal domain"/>
    <property type="match status" value="1"/>
</dbReference>
<dbReference type="HAMAP" id="MF_00736">
    <property type="entry name" value="Ribosomal_uL11"/>
    <property type="match status" value="1"/>
</dbReference>
<dbReference type="InterPro" id="IPR000911">
    <property type="entry name" value="Ribosomal_uL11"/>
</dbReference>
<dbReference type="InterPro" id="IPR006519">
    <property type="entry name" value="Ribosomal_uL11_bac-typ"/>
</dbReference>
<dbReference type="InterPro" id="IPR020783">
    <property type="entry name" value="Ribosomal_uL11_C"/>
</dbReference>
<dbReference type="InterPro" id="IPR036769">
    <property type="entry name" value="Ribosomal_uL11_C_sf"/>
</dbReference>
<dbReference type="InterPro" id="IPR020785">
    <property type="entry name" value="Ribosomal_uL11_CS"/>
</dbReference>
<dbReference type="InterPro" id="IPR020784">
    <property type="entry name" value="Ribosomal_uL11_N"/>
</dbReference>
<dbReference type="InterPro" id="IPR036796">
    <property type="entry name" value="Ribosomal_uL11_N_sf"/>
</dbReference>
<dbReference type="NCBIfam" id="TIGR01632">
    <property type="entry name" value="L11_bact"/>
    <property type="match status" value="1"/>
</dbReference>
<dbReference type="PANTHER" id="PTHR11661">
    <property type="entry name" value="60S RIBOSOMAL PROTEIN L12"/>
    <property type="match status" value="1"/>
</dbReference>
<dbReference type="PANTHER" id="PTHR11661:SF1">
    <property type="entry name" value="LARGE RIBOSOMAL SUBUNIT PROTEIN UL11M"/>
    <property type="match status" value="1"/>
</dbReference>
<dbReference type="Pfam" id="PF00298">
    <property type="entry name" value="Ribosomal_L11"/>
    <property type="match status" value="1"/>
</dbReference>
<dbReference type="Pfam" id="PF03946">
    <property type="entry name" value="Ribosomal_L11_N"/>
    <property type="match status" value="1"/>
</dbReference>
<dbReference type="SMART" id="SM00649">
    <property type="entry name" value="RL11"/>
    <property type="match status" value="1"/>
</dbReference>
<dbReference type="SUPFAM" id="SSF54747">
    <property type="entry name" value="Ribosomal L11/L12e N-terminal domain"/>
    <property type="match status" value="1"/>
</dbReference>
<dbReference type="SUPFAM" id="SSF46906">
    <property type="entry name" value="Ribosomal protein L11, C-terminal domain"/>
    <property type="match status" value="1"/>
</dbReference>
<dbReference type="PROSITE" id="PS00359">
    <property type="entry name" value="RIBOSOMAL_L11"/>
    <property type="match status" value="1"/>
</dbReference>
<evidence type="ECO:0000255" key="1">
    <source>
        <dbReference type="HAMAP-Rule" id="MF_00736"/>
    </source>
</evidence>
<evidence type="ECO:0000305" key="2"/>
<name>RL11_OCEIH</name>
<comment type="function">
    <text evidence="1">Forms part of the ribosomal stalk which helps the ribosome interact with GTP-bound translation factors.</text>
</comment>
<comment type="subunit">
    <text evidence="1">Part of the ribosomal stalk of the 50S ribosomal subunit. Interacts with L10 and the large rRNA to form the base of the stalk. L10 forms an elongated spine to which L12 dimers bind in a sequential fashion forming a multimeric L10(L12)X complex.</text>
</comment>
<comment type="PTM">
    <text evidence="1">One or more lysine residues are methylated.</text>
</comment>
<comment type="similarity">
    <text evidence="1">Belongs to the universal ribosomal protein uL11 family.</text>
</comment>
<accession>Q8ETZ3</accession>
<protein>
    <recommendedName>
        <fullName evidence="1">Large ribosomal subunit protein uL11</fullName>
    </recommendedName>
    <alternativeName>
        <fullName evidence="2">50S ribosomal protein L11</fullName>
    </alternativeName>
</protein>
<organism>
    <name type="scientific">Oceanobacillus iheyensis (strain DSM 14371 / CIP 107618 / JCM 11309 / KCTC 3954 / HTE831)</name>
    <dbReference type="NCBI Taxonomy" id="221109"/>
    <lineage>
        <taxon>Bacteria</taxon>
        <taxon>Bacillati</taxon>
        <taxon>Bacillota</taxon>
        <taxon>Bacilli</taxon>
        <taxon>Bacillales</taxon>
        <taxon>Bacillaceae</taxon>
        <taxon>Oceanobacillus</taxon>
    </lineage>
</organism>
<sequence length="141" mass="14950">MAKKVIKLVKLQIPAGKANPAPPVGPALGQAGVNIMGFCKEFNARTQDQAGMIIPVEITVFEDRSFTFITKTPPAAVLLKKAAGIESGSGEPNKNKVASVKRDQVKEIAETKMPDLNAADVDAAMRMVEGTARSMGITIED</sequence>
<keyword id="KW-0488">Methylation</keyword>
<keyword id="KW-1185">Reference proteome</keyword>
<keyword id="KW-0687">Ribonucleoprotein</keyword>
<keyword id="KW-0689">Ribosomal protein</keyword>
<keyword id="KW-0694">RNA-binding</keyword>
<keyword id="KW-0699">rRNA-binding</keyword>
<gene>
    <name evidence="1" type="primary">rplK</name>
    <name type="ordered locus">OB0107</name>
</gene>
<reference key="1">
    <citation type="journal article" date="2002" name="Nucleic Acids Res.">
        <title>Genome sequence of Oceanobacillus iheyensis isolated from the Iheya Ridge and its unexpected adaptive capabilities to extreme environments.</title>
        <authorList>
            <person name="Takami H."/>
            <person name="Takaki Y."/>
            <person name="Uchiyama I."/>
        </authorList>
    </citation>
    <scope>NUCLEOTIDE SEQUENCE [LARGE SCALE GENOMIC DNA]</scope>
    <source>
        <strain>DSM 14371 / CIP 107618 / JCM 11309 / KCTC 3954 / HTE831</strain>
    </source>
</reference>
<feature type="chain" id="PRO_0000104330" description="Large ribosomal subunit protein uL11">
    <location>
        <begin position="1"/>
        <end position="141"/>
    </location>
</feature>
<proteinExistence type="inferred from homology"/>